<reference key="1">
    <citation type="journal article" date="2003" name="Proc. Natl. Acad. Sci. U.S.A.">
        <title>Reductive genome evolution in Buchnera aphidicola.</title>
        <authorList>
            <person name="van Ham R.C.H.J."/>
            <person name="Kamerbeek J."/>
            <person name="Palacios C."/>
            <person name="Rausell C."/>
            <person name="Abascal F."/>
            <person name="Bastolla U."/>
            <person name="Fernandez J.M."/>
            <person name="Jimenez L."/>
            <person name="Postigo M."/>
            <person name="Silva F.J."/>
            <person name="Tamames J."/>
            <person name="Viguera E."/>
            <person name="Latorre A."/>
            <person name="Valencia A."/>
            <person name="Moran F."/>
            <person name="Moya A."/>
        </authorList>
    </citation>
    <scope>NUCLEOTIDE SEQUENCE [LARGE SCALE GENOMIC DNA]</scope>
    <source>
        <strain>Bp</strain>
    </source>
</reference>
<organism>
    <name type="scientific">Buchnera aphidicola subsp. Baizongia pistaciae (strain Bp)</name>
    <dbReference type="NCBI Taxonomy" id="224915"/>
    <lineage>
        <taxon>Bacteria</taxon>
        <taxon>Pseudomonadati</taxon>
        <taxon>Pseudomonadota</taxon>
        <taxon>Gammaproteobacteria</taxon>
        <taxon>Enterobacterales</taxon>
        <taxon>Erwiniaceae</taxon>
        <taxon>Buchnera</taxon>
    </lineage>
</organism>
<keyword id="KW-0975">Bacterial flagellum</keyword>
<keyword id="KW-0997">Cell inner membrane</keyword>
<keyword id="KW-1003">Cell membrane</keyword>
<keyword id="KW-0145">Chemotaxis</keyword>
<keyword id="KW-0283">Flagellar rotation</keyword>
<keyword id="KW-0472">Membrane</keyword>
<keyword id="KW-1185">Reference proteome</keyword>
<comment type="function">
    <text evidence="1">FliG is one of three proteins (FliG, FliN, FliM) that forms the rotor-mounted switch complex (C ring), located at the base of the basal body. This complex interacts with the CheY and CheZ chemotaxis proteins, in addition to contacting components of the motor that determine the direction of flagellar rotation (By similarity).</text>
</comment>
<comment type="subcellular location">
    <subcellularLocation>
        <location evidence="1">Cell inner membrane</location>
        <topology evidence="1">Peripheral membrane protein</topology>
        <orientation evidence="1">Cytoplasmic side</orientation>
    </subcellularLocation>
    <subcellularLocation>
        <location evidence="1">Bacterial flagellum basal body</location>
    </subcellularLocation>
</comment>
<comment type="similarity">
    <text evidence="2">Belongs to the FliG family.</text>
</comment>
<protein>
    <recommendedName>
        <fullName>Flagellar motor switch protein FliG</fullName>
    </recommendedName>
</protein>
<sequence length="320" mass="37071">MNLNGEQKSAVLLALVGIDKAIEILKELSIQEIENIAKCMSYMDVISSITADLVLSEFCNEVRINKDQNISFINNNFIISLLKKVLGEHHAVLLLDKFKNQKNISDNIKKLNLINPEKIVSLIKGEHPQIIATILIYLNRNHAANILSYFEDNLSLDIIRRIANFSSLKKLGQEEFVKIIDNLINKYQNSMLNQQGIVTAVELLKLIKRDQETKILTKMFSSDKVLAKRIKTKMLEFSDIINLDDVYIRRLIKVFPLYELSEIMKVEKEEFKKKFYKNMSLENTNLIKNYCSKKIFISNDLIQKKRNNLLNSVKKILYNS</sequence>
<evidence type="ECO:0000250" key="1"/>
<evidence type="ECO:0000305" key="2"/>
<name>FLIG_BUCBP</name>
<gene>
    <name type="primary">fliG</name>
    <name type="ordered locus">bbp_069</name>
</gene>
<proteinExistence type="inferred from homology"/>
<dbReference type="EMBL" id="AE016826">
    <property type="protein sequence ID" value="AAO26805.1"/>
    <property type="molecule type" value="Genomic_DNA"/>
</dbReference>
<dbReference type="RefSeq" id="WP_011091206.1">
    <property type="nucleotide sequence ID" value="NC_004545.1"/>
</dbReference>
<dbReference type="SMR" id="Q89AZ9"/>
<dbReference type="STRING" id="224915.bbp_069"/>
<dbReference type="KEGG" id="bab:bbp_069"/>
<dbReference type="eggNOG" id="COG1536">
    <property type="taxonomic scope" value="Bacteria"/>
</dbReference>
<dbReference type="HOGENOM" id="CLU_047835_2_0_6"/>
<dbReference type="OrthoDB" id="9780302at2"/>
<dbReference type="Proteomes" id="UP000000601">
    <property type="component" value="Chromosome"/>
</dbReference>
<dbReference type="GO" id="GO:0009425">
    <property type="term" value="C:bacterial-type flagellum basal body"/>
    <property type="evidence" value="ECO:0007669"/>
    <property type="project" value="UniProtKB-SubCell"/>
</dbReference>
<dbReference type="GO" id="GO:0005886">
    <property type="term" value="C:plasma membrane"/>
    <property type="evidence" value="ECO:0007669"/>
    <property type="project" value="UniProtKB-SubCell"/>
</dbReference>
<dbReference type="GO" id="GO:0003774">
    <property type="term" value="F:cytoskeletal motor activity"/>
    <property type="evidence" value="ECO:0007669"/>
    <property type="project" value="InterPro"/>
</dbReference>
<dbReference type="GO" id="GO:0071973">
    <property type="term" value="P:bacterial-type flagellum-dependent cell motility"/>
    <property type="evidence" value="ECO:0007669"/>
    <property type="project" value="InterPro"/>
</dbReference>
<dbReference type="GO" id="GO:0006935">
    <property type="term" value="P:chemotaxis"/>
    <property type="evidence" value="ECO:0007669"/>
    <property type="project" value="UniProtKB-KW"/>
</dbReference>
<dbReference type="Gene3D" id="1.10.220.30">
    <property type="match status" value="3"/>
</dbReference>
<dbReference type="InterPro" id="IPR000090">
    <property type="entry name" value="Flg_Motor_Flig"/>
</dbReference>
<dbReference type="InterPro" id="IPR023087">
    <property type="entry name" value="Flg_Motor_Flig_C"/>
</dbReference>
<dbReference type="InterPro" id="IPR011002">
    <property type="entry name" value="FliG_a-hlx"/>
</dbReference>
<dbReference type="InterPro" id="IPR032779">
    <property type="entry name" value="FliG_M"/>
</dbReference>
<dbReference type="InterPro" id="IPR028263">
    <property type="entry name" value="FliG_N"/>
</dbReference>
<dbReference type="PANTHER" id="PTHR30534">
    <property type="entry name" value="FLAGELLAR MOTOR SWITCH PROTEIN FLIG"/>
    <property type="match status" value="1"/>
</dbReference>
<dbReference type="PANTHER" id="PTHR30534:SF0">
    <property type="entry name" value="FLAGELLAR MOTOR SWITCH PROTEIN FLIG"/>
    <property type="match status" value="1"/>
</dbReference>
<dbReference type="Pfam" id="PF01706">
    <property type="entry name" value="FliG_C"/>
    <property type="match status" value="1"/>
</dbReference>
<dbReference type="Pfam" id="PF14841">
    <property type="entry name" value="FliG_M"/>
    <property type="match status" value="1"/>
</dbReference>
<dbReference type="Pfam" id="PF14842">
    <property type="entry name" value="FliG_N"/>
    <property type="match status" value="1"/>
</dbReference>
<dbReference type="PRINTS" id="PR00954">
    <property type="entry name" value="FLGMOTORFLIG"/>
</dbReference>
<dbReference type="SUPFAM" id="SSF48029">
    <property type="entry name" value="FliG"/>
    <property type="match status" value="2"/>
</dbReference>
<accession>Q89AZ9</accession>
<feature type="chain" id="PRO_0000184087" description="Flagellar motor switch protein FliG">
    <location>
        <begin position="1"/>
        <end position="320"/>
    </location>
</feature>
<feature type="short sequence motif" description="Part of the EHPQR-motif">
    <location>
        <begin position="126"/>
        <end position="129"/>
    </location>
</feature>
<feature type="site" description="Part of the EHPQR-motif">
    <location>
        <position position="161"/>
    </location>
</feature>